<comment type="function">
    <text evidence="1 5 6">Cell wall hydrolase that cleaves gamma-D-glutamate-meso-diaminopimelate bonds in peptidoglycan (By similarity). Seems to play a role in cell separation during vegetative growth.</text>
</comment>
<comment type="subcellular location">
    <subcellularLocation>
        <location evidence="6">Secreted</location>
        <location evidence="6">Cell wall</location>
    </subcellularLocation>
    <text>LytE is localized at cell separation sites and cell poles of vegetative cells.</text>
</comment>
<comment type="induction">
    <text evidence="7 9">Expressed during the exponential growth phase, under the control of SigA (major) and SigH (minor). Is also positively regulated by the two-component system YycFG.</text>
</comment>
<comment type="domain">
    <text evidence="1">The N-terminal domain contains LysM domains that are thought to be involved in peptidoglycan binding, while the C-terminal domain is endowed with the catalytic activity.</text>
</comment>
<comment type="disruption phenotype">
    <text evidence="9">Cells lacking this gene are about twice as long as those of the wild-type strain.</text>
</comment>
<comment type="similarity">
    <text evidence="3 10">Belongs to the peptidase C40 family.</text>
</comment>
<name>LYTE_BACSU</name>
<protein>
    <recommendedName>
        <fullName>Probable peptidoglycan endopeptidase LytE</fullName>
        <ecNumber>3.4.-.-</ecNumber>
    </recommendedName>
    <alternativeName>
        <fullName>Cell wall-associated polypeptide CWBP33</fullName>
    </alternativeName>
    <alternativeName>
        <fullName>Gamma-D-glutamate-meso-diaminopimelate muropeptidase LytE</fullName>
    </alternativeName>
    <alternativeName>
        <fullName>Minor autolysin LytE</fullName>
    </alternativeName>
    <alternativeName>
        <fullName>Phosphatase-associated protein PapQ</fullName>
    </alternativeName>
    <alternativeName>
        <fullName>Vegetative cell wall hydrolase LytE</fullName>
    </alternativeName>
</protein>
<sequence length="334" mass="35455">MKKQIITATTAVVLGSTLFAGAASAQSIKVKKGDTLWDLSRKYDTTISKIKSENHLRSDIIYVGQTLSINGKSTSSKSSSSSSSSSTYKVKSGDSLWKISKKYGMTINELKKLNGLKSDLLRVGQVLKLKGSTSSSSSSSSKVSSSSTSTYKVKSGDSLSKIASKYGTTVSKLKSLNGLKSDVIYVNQVLKVKGTSTSSSKPASSSSSSSSKTSSTSLNVSKLVSDAKALVGTPYKWGGTTTSGFDCSGFIWYVLNKQTSVGRTSTAGYWSSMKSIASPSVGDFVFFTTYKSGPSHMGIYIGNNSFIHAGSDGVQISSLNNSYWKPRYLGAKRF</sequence>
<organism>
    <name type="scientific">Bacillus subtilis (strain 168)</name>
    <dbReference type="NCBI Taxonomy" id="224308"/>
    <lineage>
        <taxon>Bacteria</taxon>
        <taxon>Bacillati</taxon>
        <taxon>Bacillota</taxon>
        <taxon>Bacilli</taxon>
        <taxon>Bacillales</taxon>
        <taxon>Bacillaceae</taxon>
        <taxon>Bacillus</taxon>
    </lineage>
</organism>
<dbReference type="EC" id="3.4.-.-"/>
<dbReference type="EMBL" id="U38819">
    <property type="protein sequence ID" value="AAC25975.1"/>
    <property type="molecule type" value="Genomic_DNA"/>
</dbReference>
<dbReference type="EMBL" id="Y14082">
    <property type="protein sequence ID" value="CAA74487.1"/>
    <property type="molecule type" value="Genomic_DNA"/>
</dbReference>
<dbReference type="EMBL" id="AL009126">
    <property type="protein sequence ID" value="CAB12781.2"/>
    <property type="molecule type" value="Genomic_DNA"/>
</dbReference>
<dbReference type="EMBL" id="U05256">
    <property type="status" value="NOT_ANNOTATED_CDS"/>
    <property type="molecule type" value="Genomic_DNA"/>
</dbReference>
<dbReference type="PIR" id="G69654">
    <property type="entry name" value="G69654"/>
</dbReference>
<dbReference type="RefSeq" id="NP_388823.2">
    <property type="nucleotide sequence ID" value="NC_000964.3"/>
</dbReference>
<dbReference type="RefSeq" id="WP_003244816.1">
    <property type="nucleotide sequence ID" value="NZ_OZ025638.1"/>
</dbReference>
<dbReference type="PDB" id="8I2D">
    <property type="method" value="X-ray"/>
    <property type="resolution" value="1.31 A"/>
    <property type="chains" value="A=218-334"/>
</dbReference>
<dbReference type="PDB" id="8I2E">
    <property type="method" value="X-ray"/>
    <property type="resolution" value="3.20 A"/>
    <property type="chains" value="B/D=26-334"/>
</dbReference>
<dbReference type="PDB" id="8I2F">
    <property type="method" value="X-ray"/>
    <property type="resolution" value="2.03 A"/>
    <property type="chains" value="B/D=214-334"/>
</dbReference>
<dbReference type="PDBsum" id="8I2D"/>
<dbReference type="PDBsum" id="8I2E"/>
<dbReference type="PDBsum" id="8I2F"/>
<dbReference type="SMR" id="P54421"/>
<dbReference type="FunCoup" id="P54421">
    <property type="interactions" value="41"/>
</dbReference>
<dbReference type="STRING" id="224308.BSU09420"/>
<dbReference type="CAZy" id="CBM50">
    <property type="family name" value="Carbohydrate-Binding Module Family 50"/>
</dbReference>
<dbReference type="MEROPS" id="C40.003"/>
<dbReference type="PaxDb" id="224308-BSU09420"/>
<dbReference type="EnsemblBacteria" id="CAB12781">
    <property type="protein sequence ID" value="CAB12781"/>
    <property type="gene ID" value="BSU_09420"/>
</dbReference>
<dbReference type="GeneID" id="939269"/>
<dbReference type="KEGG" id="bsu:BSU09420"/>
<dbReference type="PATRIC" id="fig|224308.179.peg.1015"/>
<dbReference type="eggNOG" id="COG0791">
    <property type="taxonomic scope" value="Bacteria"/>
</dbReference>
<dbReference type="eggNOG" id="COG1388">
    <property type="taxonomic scope" value="Bacteria"/>
</dbReference>
<dbReference type="InParanoid" id="P54421"/>
<dbReference type="OrthoDB" id="9813368at2"/>
<dbReference type="PhylomeDB" id="P54421"/>
<dbReference type="BioCyc" id="BSUB:BSU09420-MONOMER"/>
<dbReference type="Proteomes" id="UP000001570">
    <property type="component" value="Chromosome"/>
</dbReference>
<dbReference type="GO" id="GO:0005576">
    <property type="term" value="C:extracellular region"/>
    <property type="evidence" value="ECO:0007669"/>
    <property type="project" value="UniProtKB-KW"/>
</dbReference>
<dbReference type="GO" id="GO:0008234">
    <property type="term" value="F:cysteine-type peptidase activity"/>
    <property type="evidence" value="ECO:0007669"/>
    <property type="project" value="UniProtKB-KW"/>
</dbReference>
<dbReference type="GO" id="GO:0008932">
    <property type="term" value="F:lytic endotransglycosylase activity"/>
    <property type="evidence" value="ECO:0000318"/>
    <property type="project" value="GO_Central"/>
</dbReference>
<dbReference type="GO" id="GO:0071555">
    <property type="term" value="P:cell wall organization"/>
    <property type="evidence" value="ECO:0007669"/>
    <property type="project" value="UniProtKB-KW"/>
</dbReference>
<dbReference type="GO" id="GO:0006508">
    <property type="term" value="P:proteolysis"/>
    <property type="evidence" value="ECO:0007669"/>
    <property type="project" value="UniProtKB-KW"/>
</dbReference>
<dbReference type="CDD" id="cd00118">
    <property type="entry name" value="LysM"/>
    <property type="match status" value="3"/>
</dbReference>
<dbReference type="FunFam" id="3.10.350.10:FF:000011">
    <property type="entry name" value="Peptidoglycan endopeptidase LytF"/>
    <property type="match status" value="1"/>
</dbReference>
<dbReference type="FunFam" id="3.90.1720.10:FF:000009">
    <property type="entry name" value="Peptidoglycan endopeptidase LytF"/>
    <property type="match status" value="1"/>
</dbReference>
<dbReference type="Gene3D" id="3.90.1720.10">
    <property type="entry name" value="endopeptidase domain like (from Nostoc punctiforme)"/>
    <property type="match status" value="1"/>
</dbReference>
<dbReference type="Gene3D" id="3.10.350.10">
    <property type="entry name" value="LysM domain"/>
    <property type="match status" value="3"/>
</dbReference>
<dbReference type="InterPro" id="IPR018392">
    <property type="entry name" value="LysM_dom"/>
</dbReference>
<dbReference type="InterPro" id="IPR036779">
    <property type="entry name" value="LysM_dom_sf"/>
</dbReference>
<dbReference type="InterPro" id="IPR052062">
    <property type="entry name" value="Murein_DD/LD_carboxypeptidase"/>
</dbReference>
<dbReference type="InterPro" id="IPR000064">
    <property type="entry name" value="NLP_P60_dom"/>
</dbReference>
<dbReference type="InterPro" id="IPR038765">
    <property type="entry name" value="Papain-like_cys_pep_sf"/>
</dbReference>
<dbReference type="PANTHER" id="PTHR47360:SF1">
    <property type="entry name" value="ENDOPEPTIDASE NLPC-RELATED"/>
    <property type="match status" value="1"/>
</dbReference>
<dbReference type="PANTHER" id="PTHR47360">
    <property type="entry name" value="MUREIN DD-ENDOPEPTIDASE MEPS/MUREIN LD-CARBOXYPEPTIDASE"/>
    <property type="match status" value="1"/>
</dbReference>
<dbReference type="Pfam" id="PF01476">
    <property type="entry name" value="LysM"/>
    <property type="match status" value="3"/>
</dbReference>
<dbReference type="Pfam" id="PF00877">
    <property type="entry name" value="NLPC_P60"/>
    <property type="match status" value="1"/>
</dbReference>
<dbReference type="SMART" id="SM00257">
    <property type="entry name" value="LysM"/>
    <property type="match status" value="3"/>
</dbReference>
<dbReference type="SUPFAM" id="SSF54001">
    <property type="entry name" value="Cysteine proteinases"/>
    <property type="match status" value="1"/>
</dbReference>
<dbReference type="SUPFAM" id="SSF54106">
    <property type="entry name" value="LysM domain"/>
    <property type="match status" value="3"/>
</dbReference>
<dbReference type="PROSITE" id="PS51782">
    <property type="entry name" value="LYSM"/>
    <property type="match status" value="3"/>
</dbReference>
<dbReference type="PROSITE" id="PS51935">
    <property type="entry name" value="NLPC_P60"/>
    <property type="match status" value="1"/>
</dbReference>
<keyword id="KW-0002">3D-structure</keyword>
<keyword id="KW-0134">Cell wall</keyword>
<keyword id="KW-0961">Cell wall biogenesis/degradation</keyword>
<keyword id="KW-0903">Direct protein sequencing</keyword>
<keyword id="KW-0378">Hydrolase</keyword>
<keyword id="KW-0645">Protease</keyword>
<keyword id="KW-1185">Reference proteome</keyword>
<keyword id="KW-0677">Repeat</keyword>
<keyword id="KW-0964">Secreted</keyword>
<keyword id="KW-0732">Signal</keyword>
<keyword id="KW-0788">Thiol protease</keyword>
<reference key="1">
    <citation type="journal article" date="1998" name="J. Bacteriol.">
        <title>The lytE gene of Bacillus subtilis 168 encodes a cell wall hydrolase.</title>
        <authorList>
            <person name="Margot P."/>
            <person name="Wahlen M."/>
            <person name="Gholamhuseinian A."/>
            <person name="Piggot P."/>
            <person name="Karamata D."/>
        </authorList>
    </citation>
    <scope>NUCLEOTIDE SEQUENCE [GENOMIC DNA]</scope>
    <scope>PROTEIN SEQUENCE OF 26-36</scope>
    <source>
        <strain>168</strain>
    </source>
</reference>
<reference key="2">
    <citation type="journal article" date="1998" name="Microbiology">
        <title>The 172 kb prkA-addAB region from 83 degrees to 97 degrees of the Bacillus subtilis chromosome contains several dysfunctional genes, the glyB marker, many genes encoding transporter proteins, and the ubiquitous hit gene.</title>
        <authorList>
            <person name="Noback M.A."/>
            <person name="Holsappel S."/>
            <person name="Kiewiet R."/>
            <person name="Terpstra P."/>
            <person name="Wambutt R."/>
            <person name="Wedler H."/>
            <person name="Venema G."/>
            <person name="Bron S."/>
        </authorList>
    </citation>
    <scope>NUCLEOTIDE SEQUENCE [GENOMIC DNA]</scope>
    <source>
        <strain>168</strain>
    </source>
</reference>
<reference key="3">
    <citation type="journal article" date="1997" name="Nature">
        <title>The complete genome sequence of the Gram-positive bacterium Bacillus subtilis.</title>
        <authorList>
            <person name="Kunst F."/>
            <person name="Ogasawara N."/>
            <person name="Moszer I."/>
            <person name="Albertini A.M."/>
            <person name="Alloni G."/>
            <person name="Azevedo V."/>
            <person name="Bertero M.G."/>
            <person name="Bessieres P."/>
            <person name="Bolotin A."/>
            <person name="Borchert S."/>
            <person name="Borriss R."/>
            <person name="Boursier L."/>
            <person name="Brans A."/>
            <person name="Braun M."/>
            <person name="Brignell S.C."/>
            <person name="Bron S."/>
            <person name="Brouillet S."/>
            <person name="Bruschi C.V."/>
            <person name="Caldwell B."/>
            <person name="Capuano V."/>
            <person name="Carter N.M."/>
            <person name="Choi S.-K."/>
            <person name="Codani J.-J."/>
            <person name="Connerton I.F."/>
            <person name="Cummings N.J."/>
            <person name="Daniel R.A."/>
            <person name="Denizot F."/>
            <person name="Devine K.M."/>
            <person name="Duesterhoeft A."/>
            <person name="Ehrlich S.D."/>
            <person name="Emmerson P.T."/>
            <person name="Entian K.-D."/>
            <person name="Errington J."/>
            <person name="Fabret C."/>
            <person name="Ferrari E."/>
            <person name="Foulger D."/>
            <person name="Fritz C."/>
            <person name="Fujita M."/>
            <person name="Fujita Y."/>
            <person name="Fuma S."/>
            <person name="Galizzi A."/>
            <person name="Galleron N."/>
            <person name="Ghim S.-Y."/>
            <person name="Glaser P."/>
            <person name="Goffeau A."/>
            <person name="Golightly E.J."/>
            <person name="Grandi G."/>
            <person name="Guiseppi G."/>
            <person name="Guy B.J."/>
            <person name="Haga K."/>
            <person name="Haiech J."/>
            <person name="Harwood C.R."/>
            <person name="Henaut A."/>
            <person name="Hilbert H."/>
            <person name="Holsappel S."/>
            <person name="Hosono S."/>
            <person name="Hullo M.-F."/>
            <person name="Itaya M."/>
            <person name="Jones L.-M."/>
            <person name="Joris B."/>
            <person name="Karamata D."/>
            <person name="Kasahara Y."/>
            <person name="Klaerr-Blanchard M."/>
            <person name="Klein C."/>
            <person name="Kobayashi Y."/>
            <person name="Koetter P."/>
            <person name="Koningstein G."/>
            <person name="Krogh S."/>
            <person name="Kumano M."/>
            <person name="Kurita K."/>
            <person name="Lapidus A."/>
            <person name="Lardinois S."/>
            <person name="Lauber J."/>
            <person name="Lazarevic V."/>
            <person name="Lee S.-M."/>
            <person name="Levine A."/>
            <person name="Liu H."/>
            <person name="Masuda S."/>
            <person name="Mauel C."/>
            <person name="Medigue C."/>
            <person name="Medina N."/>
            <person name="Mellado R.P."/>
            <person name="Mizuno M."/>
            <person name="Moestl D."/>
            <person name="Nakai S."/>
            <person name="Noback M."/>
            <person name="Noone D."/>
            <person name="O'Reilly M."/>
            <person name="Ogawa K."/>
            <person name="Ogiwara A."/>
            <person name="Oudega B."/>
            <person name="Park S.-H."/>
            <person name="Parro V."/>
            <person name="Pohl T.M."/>
            <person name="Portetelle D."/>
            <person name="Porwollik S."/>
            <person name="Prescott A.M."/>
            <person name="Presecan E."/>
            <person name="Pujic P."/>
            <person name="Purnelle B."/>
            <person name="Rapoport G."/>
            <person name="Rey M."/>
            <person name="Reynolds S."/>
            <person name="Rieger M."/>
            <person name="Rivolta C."/>
            <person name="Rocha E."/>
            <person name="Roche B."/>
            <person name="Rose M."/>
            <person name="Sadaie Y."/>
            <person name="Sato T."/>
            <person name="Scanlan E."/>
            <person name="Schleich S."/>
            <person name="Schroeter R."/>
            <person name="Scoffone F."/>
            <person name="Sekiguchi J."/>
            <person name="Sekowska A."/>
            <person name="Seror S.J."/>
            <person name="Serror P."/>
            <person name="Shin B.-S."/>
            <person name="Soldo B."/>
            <person name="Sorokin A."/>
            <person name="Tacconi E."/>
            <person name="Takagi T."/>
            <person name="Takahashi H."/>
            <person name="Takemaru K."/>
            <person name="Takeuchi M."/>
            <person name="Tamakoshi A."/>
            <person name="Tanaka T."/>
            <person name="Terpstra P."/>
            <person name="Tognoni A."/>
            <person name="Tosato V."/>
            <person name="Uchiyama S."/>
            <person name="Vandenbol M."/>
            <person name="Vannier F."/>
            <person name="Vassarotti A."/>
            <person name="Viari A."/>
            <person name="Wambutt R."/>
            <person name="Wedler E."/>
            <person name="Wedler H."/>
            <person name="Weitzenegger T."/>
            <person name="Winters P."/>
            <person name="Wipat A."/>
            <person name="Yamamoto H."/>
            <person name="Yamane K."/>
            <person name="Yasumoto K."/>
            <person name="Yata K."/>
            <person name="Yoshida K."/>
            <person name="Yoshikawa H.-F."/>
            <person name="Zumstein E."/>
            <person name="Yoshikawa H."/>
            <person name="Danchin A."/>
        </authorList>
    </citation>
    <scope>NUCLEOTIDE SEQUENCE [LARGE SCALE GENOMIC DNA]</scope>
    <source>
        <strain>168</strain>
    </source>
</reference>
<reference key="4">
    <citation type="journal article" date="2009" name="Microbiology">
        <title>From a consortium sequence to a unified sequence: the Bacillus subtilis 168 reference genome a decade later.</title>
        <authorList>
            <person name="Barbe V."/>
            <person name="Cruveiller S."/>
            <person name="Kunst F."/>
            <person name="Lenoble P."/>
            <person name="Meurice G."/>
            <person name="Sekowska A."/>
            <person name="Vallenet D."/>
            <person name="Wang T."/>
            <person name="Moszer I."/>
            <person name="Medigue C."/>
            <person name="Danchin A."/>
        </authorList>
    </citation>
    <scope>SEQUENCE REVISION</scope>
</reference>
<reference key="5">
    <citation type="journal article" date="1994" name="J. Bacteriol.">
        <title>Identification of two distinct Bacillus subtilis citrate synthase genes.</title>
        <authorList>
            <person name="Jin S."/>
            <person name="Sonenshein A.L."/>
        </authorList>
    </citation>
    <scope>NUCLEOTIDE SEQUENCE [GENOMIC DNA] OF 311-334</scope>
    <source>
        <strain>168 / SMY</strain>
    </source>
</reference>
<reference key="6">
    <citation type="journal article" date="1998" name="J. Bacteriol.">
        <title>Regulation of a new cell wall hydrolase gene, cwlF, which affects cell separation in Bacillus subtilis.</title>
        <authorList>
            <person name="Ishikawa S."/>
            <person name="Hara Y."/>
            <person name="Ohnishi R."/>
            <person name="Sekiguchi J."/>
        </authorList>
    </citation>
    <scope>PROTEIN SEQUENCE OF 26-45</scope>
    <scope>INDUCTION</scope>
    <scope>DISRUPTION PHENOTYPE</scope>
    <source>
        <strain>168</strain>
    </source>
</reference>
<reference key="7">
    <citation type="journal article" date="1999" name="J. Bacteriol.">
        <title>Peptidoglycan hydrolase LytF plays a role in cell separation with CwlF during vegetative growth of Bacillus subtilis.</title>
        <authorList>
            <person name="Ohnishi R."/>
            <person name="Ishikawa S."/>
            <person name="Sekiguchi J."/>
        </authorList>
    </citation>
    <scope>FUNCTION</scope>
    <source>
        <strain>168</strain>
    </source>
</reference>
<reference key="8">
    <citation type="journal article" date="2003" name="J. Bacteriol.">
        <title>Localization of the vegetative cell wall hydrolases LytC, LytE, and LytF on the Bacillus subtilis cell surface and stability of these enzymes to cell wall-bound or extracellular proteases.</title>
        <authorList>
            <person name="Yamamoto H."/>
            <person name="Kurosawa S."/>
            <person name="Sekiguchi J."/>
        </authorList>
    </citation>
    <scope>SUBCELLULAR LOCATION</scope>
    <scope>FUNCTION</scope>
    <source>
        <strain>168</strain>
    </source>
</reference>
<reference key="9">
    <citation type="journal article" date="2007" name="Mol. Microbiol.">
        <title>The essential YycFG two-component system controls cell wall metabolism in Bacillus subtilis.</title>
        <authorList>
            <person name="Bisicchia P."/>
            <person name="Noone D."/>
            <person name="Lioliou E."/>
            <person name="Howell A."/>
            <person name="Quigley S."/>
            <person name="Jensen T."/>
            <person name="Jarmer H."/>
            <person name="Devine K.M."/>
        </authorList>
    </citation>
    <scope>INDUCTION BY YYCFG</scope>
</reference>
<gene>
    <name type="primary">lytE</name>
    <name type="synonym">cwlF</name>
    <name type="synonym">papQ</name>
    <name type="ordered locus">BSU09420</name>
</gene>
<proteinExistence type="evidence at protein level"/>
<evidence type="ECO:0000250" key="1"/>
<evidence type="ECO:0000255" key="2">
    <source>
        <dbReference type="PROSITE-ProRule" id="PRU01118"/>
    </source>
</evidence>
<evidence type="ECO:0000255" key="3">
    <source>
        <dbReference type="PROSITE-ProRule" id="PRU01284"/>
    </source>
</evidence>
<evidence type="ECO:0000256" key="4">
    <source>
        <dbReference type="SAM" id="MobiDB-lite"/>
    </source>
</evidence>
<evidence type="ECO:0000269" key="5">
    <source>
    </source>
</evidence>
<evidence type="ECO:0000269" key="6">
    <source>
    </source>
</evidence>
<evidence type="ECO:0000269" key="7">
    <source>
    </source>
</evidence>
<evidence type="ECO:0000269" key="8">
    <source>
    </source>
</evidence>
<evidence type="ECO:0000269" key="9">
    <source>
    </source>
</evidence>
<evidence type="ECO:0000305" key="10"/>
<evidence type="ECO:0007829" key="11">
    <source>
        <dbReference type="PDB" id="8I2D"/>
    </source>
</evidence>
<feature type="signal peptide" evidence="8 9">
    <location>
        <begin position="1"/>
        <end position="25"/>
    </location>
</feature>
<feature type="chain" id="PRO_0000019752" description="Probable peptidoglycan endopeptidase LytE">
    <location>
        <begin position="26"/>
        <end position="334"/>
    </location>
</feature>
<feature type="domain" description="LysM 1" evidence="2">
    <location>
        <begin position="26"/>
        <end position="69"/>
    </location>
</feature>
<feature type="domain" description="LysM 2" evidence="2">
    <location>
        <begin position="86"/>
        <end position="129"/>
    </location>
</feature>
<feature type="domain" description="LysM 3" evidence="2">
    <location>
        <begin position="149"/>
        <end position="192"/>
    </location>
</feature>
<feature type="domain" description="NlpC/P60" evidence="3">
    <location>
        <begin position="217"/>
        <end position="334"/>
    </location>
</feature>
<feature type="region of interest" description="Disordered" evidence="4">
    <location>
        <begin position="70"/>
        <end position="89"/>
    </location>
</feature>
<feature type="region of interest" description="Disordered" evidence="4">
    <location>
        <begin position="131"/>
        <end position="153"/>
    </location>
</feature>
<feature type="region of interest" description="Disordered" evidence="4">
    <location>
        <begin position="195"/>
        <end position="215"/>
    </location>
</feature>
<feature type="compositionally biased region" description="Low complexity" evidence="4">
    <location>
        <begin position="72"/>
        <end position="87"/>
    </location>
</feature>
<feature type="compositionally biased region" description="Low complexity" evidence="4">
    <location>
        <begin position="132"/>
        <end position="153"/>
    </location>
</feature>
<feature type="active site" description="Nucleophile" evidence="3">
    <location>
        <position position="247"/>
    </location>
</feature>
<feature type="active site" description="Proton acceptor" evidence="3">
    <location>
        <position position="296"/>
    </location>
</feature>
<feature type="active site" evidence="3">
    <location>
        <position position="308"/>
    </location>
</feature>
<feature type="sequence conflict" description="In Ref. 2; CAA74487." evidence="10" ref="2">
    <original>STLFAGAASAQSIKVKKGDTLWDLSRKYDTT</original>
    <variation>ALFAHTSIRELKEHIVRVLIRMRAMYKISEKRQYGLKKDK</variation>
    <location>
        <begin position="16"/>
        <end position="46"/>
    </location>
</feature>
<feature type="sequence conflict" description="In Ref. 2; CAA74487." evidence="10" ref="2">
    <original>LWKISKKY</original>
    <variation>FENFKKI</variation>
    <location>
        <begin position="96"/>
        <end position="103"/>
    </location>
</feature>
<feature type="sequence conflict" description="In Ref. 2; CAA74487." evidence="10" ref="2">
    <original>SSSSSKVS</original>
    <variation>TPAHQKCA</variation>
    <location>
        <begin position="137"/>
        <end position="144"/>
    </location>
</feature>
<feature type="sequence conflict" description="In Ref. 2; CAA74487." evidence="10" ref="2">
    <original>SGDS</original>
    <variation>RETG</variation>
    <location>
        <begin position="155"/>
        <end position="158"/>
    </location>
</feature>
<feature type="sequence conflict" description="In Ref. 2; CAA74487." evidence="10" ref="2">
    <original>S</original>
    <variation>R</variation>
    <location>
        <position position="164"/>
    </location>
</feature>
<feature type="sequence conflict" description="In Ref. 2; CAA74487." evidence="10" ref="2">
    <original>SLNG</original>
    <variation>RLKRA</variation>
    <location>
        <begin position="175"/>
        <end position="178"/>
    </location>
</feature>
<feature type="helix" evidence="11">
    <location>
        <begin position="220"/>
        <end position="229"/>
    </location>
</feature>
<feature type="turn" evidence="11">
    <location>
        <begin position="230"/>
        <end position="232"/>
    </location>
</feature>
<feature type="helix" evidence="11">
    <location>
        <begin position="247"/>
        <end position="256"/>
    </location>
</feature>
<feature type="helix" evidence="11">
    <location>
        <begin position="266"/>
        <end position="272"/>
    </location>
</feature>
<feature type="strand" evidence="11">
    <location>
        <begin position="273"/>
        <end position="275"/>
    </location>
</feature>
<feature type="strand" evidence="11">
    <location>
        <begin position="284"/>
        <end position="287"/>
    </location>
</feature>
<feature type="strand" evidence="11">
    <location>
        <begin position="290"/>
        <end position="294"/>
    </location>
</feature>
<feature type="strand" evidence="11">
    <location>
        <begin position="296"/>
        <end position="302"/>
    </location>
</feature>
<feature type="strand" evidence="11">
    <location>
        <begin position="305"/>
        <end position="310"/>
    </location>
</feature>
<feature type="strand" evidence="11">
    <location>
        <begin position="313"/>
        <end position="318"/>
    </location>
</feature>
<feature type="turn" evidence="11">
    <location>
        <begin position="322"/>
        <end position="324"/>
    </location>
</feature>
<feature type="helix" evidence="11">
    <location>
        <begin position="325"/>
        <end position="327"/>
    </location>
</feature>
<feature type="strand" evidence="11">
    <location>
        <begin position="328"/>
        <end position="333"/>
    </location>
</feature>
<accession>P54421</accession>
<accession>O07574</accession>